<organism>
    <name type="scientific">Danio rerio</name>
    <name type="common">Zebrafish</name>
    <name type="synonym">Brachydanio rerio</name>
    <dbReference type="NCBI Taxonomy" id="7955"/>
    <lineage>
        <taxon>Eukaryota</taxon>
        <taxon>Metazoa</taxon>
        <taxon>Chordata</taxon>
        <taxon>Craniata</taxon>
        <taxon>Vertebrata</taxon>
        <taxon>Euteleostomi</taxon>
        <taxon>Actinopterygii</taxon>
        <taxon>Neopterygii</taxon>
        <taxon>Teleostei</taxon>
        <taxon>Ostariophysi</taxon>
        <taxon>Cypriniformes</taxon>
        <taxon>Danionidae</taxon>
        <taxon>Danioninae</taxon>
        <taxon>Danio</taxon>
    </lineage>
</organism>
<proteinExistence type="evidence at protein level"/>
<evidence type="ECO:0000250" key="1">
    <source>
        <dbReference type="UniProtKB" id="Q969S8"/>
    </source>
</evidence>
<evidence type="ECO:0000256" key="2">
    <source>
        <dbReference type="SAM" id="MobiDB-lite"/>
    </source>
</evidence>
<evidence type="ECO:0000269" key="3">
    <source>
    </source>
</evidence>
<evidence type="ECO:0000305" key="4"/>
<evidence type="ECO:0007744" key="5">
    <source>
        <dbReference type="PDB" id="5TD7"/>
    </source>
</evidence>
<evidence type="ECO:0007829" key="6">
    <source>
        <dbReference type="PDB" id="6VNQ"/>
    </source>
</evidence>
<evidence type="ECO:0007829" key="7">
    <source>
        <dbReference type="PDB" id="6WBQ"/>
    </source>
</evidence>
<evidence type="ECO:0007829" key="8">
    <source>
        <dbReference type="PDB" id="6WDX"/>
    </source>
</evidence>
<evidence type="ECO:0007829" key="9">
    <source>
        <dbReference type="PDB" id="7KUS"/>
    </source>
</evidence>
<evidence type="ECO:0007829" key="10">
    <source>
        <dbReference type="PDB" id="7KUT"/>
    </source>
</evidence>
<evidence type="ECO:0007829" key="11">
    <source>
        <dbReference type="PDB" id="7U3M"/>
    </source>
</evidence>
<comment type="function">
    <text evidence="3">Polyamine deacetylase (PDAC), which acts preferentially on N(8)-acetylspermidine, and also on acetylcadaverine and acetylputrescine (PubMed:28516954). Exhibits attenuated catalytic activity toward N(1),N(8)-diacetylspermidine and very low activity, if any, toward N(1)-acetylspermidine (PubMed:28516954). Has a very weak lysine deacetylase, if any (PubMed:28516954).</text>
</comment>
<comment type="catalytic activity">
    <reaction evidence="3">
        <text>N(8)-acetylspermidine + H2O = spermidine + acetate</text>
        <dbReference type="Rhea" id="RHEA:23928"/>
        <dbReference type="ChEBI" id="CHEBI:15377"/>
        <dbReference type="ChEBI" id="CHEBI:30089"/>
        <dbReference type="ChEBI" id="CHEBI:57834"/>
        <dbReference type="ChEBI" id="CHEBI:58535"/>
        <dbReference type="EC" id="3.5.1.48"/>
    </reaction>
</comment>
<comment type="catalytic activity">
    <reaction evidence="3">
        <text>N-acetylputrescine + H2O = putrescine + acetate</text>
        <dbReference type="Rhea" id="RHEA:23412"/>
        <dbReference type="ChEBI" id="CHEBI:15377"/>
        <dbReference type="ChEBI" id="CHEBI:30089"/>
        <dbReference type="ChEBI" id="CHEBI:58263"/>
        <dbReference type="ChEBI" id="CHEBI:326268"/>
        <dbReference type="EC" id="3.5.1.62"/>
    </reaction>
</comment>
<comment type="catalytic activity">
    <reaction evidence="3">
        <text>N-acetylcadaverine + H2O = cadaverine + acetate</text>
        <dbReference type="Rhea" id="RHEA:51892"/>
        <dbReference type="ChEBI" id="CHEBI:15377"/>
        <dbReference type="ChEBI" id="CHEBI:30089"/>
        <dbReference type="ChEBI" id="CHEBI:58384"/>
        <dbReference type="ChEBI" id="CHEBI:134408"/>
    </reaction>
</comment>
<comment type="biophysicochemical properties">
    <kinetics>
        <KM evidence="3">90 uM for acetylcadaverine</KM>
        <KM evidence="3">160 uM for acetylputrescine</KM>
        <KM evidence="3">130 uM for N(8)-acetylspermidine</KM>
        <KM evidence="3">180 uM for N(1),N(8)-diacetylspermidine</KM>
    </kinetics>
</comment>
<comment type="subcellular location">
    <subcellularLocation>
        <location evidence="1">Cytoplasm</location>
    </subcellularLocation>
    <subcellularLocation>
        <location evidence="1">Nucleus</location>
    </subcellularLocation>
    <text evidence="1">Excluded from the nucleoli.</text>
</comment>
<comment type="similarity">
    <text evidence="4">Belongs to the histone deacetylase family. HD type 2 subfamily.</text>
</comment>
<comment type="caution">
    <text evidence="1">Originally thought to be a histone deacetylase and shown in vitro to have this activity (By similarity). Has also been shown to be involved in MSH2 deacetylation (By similarity). However, protein deacetylase activity is a matter of debate, as 3D structure analysis shows that a glutamate gatekeeper and a sterically constricted active site confer specificity for N(8)-acetylspermidine hydrolysis and disfavour acetyllysine hydrolysis. Supporting this observation, has been shown to exhibit only very low activity, if any, towards acetyl-lysine peptide substrates (By similarity).</text>
</comment>
<protein>
    <recommendedName>
        <fullName>Polyamine deacetylase HDAC10</fullName>
        <ecNumber evidence="3">3.5.1.48</ecNumber>
        <ecNumber evidence="3">3.5.1.62</ecNumber>
    </recommendedName>
    <alternativeName>
        <fullName>Histone deacetylase 10</fullName>
    </alternativeName>
</protein>
<keyword id="KW-0002">3D-structure</keyword>
<keyword id="KW-0963">Cytoplasm</keyword>
<keyword id="KW-0378">Hydrolase</keyword>
<keyword id="KW-0479">Metal-binding</keyword>
<keyword id="KW-0539">Nucleus</keyword>
<keyword id="KW-1185">Reference proteome</keyword>
<keyword id="KW-0862">Zinc</keyword>
<reference key="1">
    <citation type="journal article" date="2013" name="Nature">
        <title>The zebrafish reference genome sequence and its relationship to the human genome.</title>
        <authorList>
            <person name="Howe K."/>
            <person name="Clark M.D."/>
            <person name="Torroja C.F."/>
            <person name="Torrance J."/>
            <person name="Berthelot C."/>
            <person name="Muffato M."/>
            <person name="Collins J.E."/>
            <person name="Humphray S."/>
            <person name="McLaren K."/>
            <person name="Matthews L."/>
            <person name="McLaren S."/>
            <person name="Sealy I."/>
            <person name="Caccamo M."/>
            <person name="Churcher C."/>
            <person name="Scott C."/>
            <person name="Barrett J.C."/>
            <person name="Koch R."/>
            <person name="Rauch G.J."/>
            <person name="White S."/>
            <person name="Chow W."/>
            <person name="Kilian B."/>
            <person name="Quintais L.T."/>
            <person name="Guerra-Assuncao J.A."/>
            <person name="Zhou Y."/>
            <person name="Gu Y."/>
            <person name="Yen J."/>
            <person name="Vogel J.H."/>
            <person name="Eyre T."/>
            <person name="Redmond S."/>
            <person name="Banerjee R."/>
            <person name="Chi J."/>
            <person name="Fu B."/>
            <person name="Langley E."/>
            <person name="Maguire S.F."/>
            <person name="Laird G.K."/>
            <person name="Lloyd D."/>
            <person name="Kenyon E."/>
            <person name="Donaldson S."/>
            <person name="Sehra H."/>
            <person name="Almeida-King J."/>
            <person name="Loveland J."/>
            <person name="Trevanion S."/>
            <person name="Jones M."/>
            <person name="Quail M."/>
            <person name="Willey D."/>
            <person name="Hunt A."/>
            <person name="Burton J."/>
            <person name="Sims S."/>
            <person name="McLay K."/>
            <person name="Plumb B."/>
            <person name="Davis J."/>
            <person name="Clee C."/>
            <person name="Oliver K."/>
            <person name="Clark R."/>
            <person name="Riddle C."/>
            <person name="Elliot D."/>
            <person name="Threadgold G."/>
            <person name="Harden G."/>
            <person name="Ware D."/>
            <person name="Begum S."/>
            <person name="Mortimore B."/>
            <person name="Kerry G."/>
            <person name="Heath P."/>
            <person name="Phillimore B."/>
            <person name="Tracey A."/>
            <person name="Corby N."/>
            <person name="Dunn M."/>
            <person name="Johnson C."/>
            <person name="Wood J."/>
            <person name="Clark S."/>
            <person name="Pelan S."/>
            <person name="Griffiths G."/>
            <person name="Smith M."/>
            <person name="Glithero R."/>
            <person name="Howden P."/>
            <person name="Barker N."/>
            <person name="Lloyd C."/>
            <person name="Stevens C."/>
            <person name="Harley J."/>
            <person name="Holt K."/>
            <person name="Panagiotidis G."/>
            <person name="Lovell J."/>
            <person name="Beasley H."/>
            <person name="Henderson C."/>
            <person name="Gordon D."/>
            <person name="Auger K."/>
            <person name="Wright D."/>
            <person name="Collins J."/>
            <person name="Raisen C."/>
            <person name="Dyer L."/>
            <person name="Leung K."/>
            <person name="Robertson L."/>
            <person name="Ambridge K."/>
            <person name="Leongamornlert D."/>
            <person name="McGuire S."/>
            <person name="Gilderthorp R."/>
            <person name="Griffiths C."/>
            <person name="Manthravadi D."/>
            <person name="Nichol S."/>
            <person name="Barker G."/>
            <person name="Whitehead S."/>
            <person name="Kay M."/>
            <person name="Brown J."/>
            <person name="Murnane C."/>
            <person name="Gray E."/>
            <person name="Humphries M."/>
            <person name="Sycamore N."/>
            <person name="Barker D."/>
            <person name="Saunders D."/>
            <person name="Wallis J."/>
            <person name="Babbage A."/>
            <person name="Hammond S."/>
            <person name="Mashreghi-Mohammadi M."/>
            <person name="Barr L."/>
            <person name="Martin S."/>
            <person name="Wray P."/>
            <person name="Ellington A."/>
            <person name="Matthews N."/>
            <person name="Ellwood M."/>
            <person name="Woodmansey R."/>
            <person name="Clark G."/>
            <person name="Cooper J."/>
            <person name="Tromans A."/>
            <person name="Grafham D."/>
            <person name="Skuce C."/>
            <person name="Pandian R."/>
            <person name="Andrews R."/>
            <person name="Harrison E."/>
            <person name="Kimberley A."/>
            <person name="Garnett J."/>
            <person name="Fosker N."/>
            <person name="Hall R."/>
            <person name="Garner P."/>
            <person name="Kelly D."/>
            <person name="Bird C."/>
            <person name="Palmer S."/>
            <person name="Gehring I."/>
            <person name="Berger A."/>
            <person name="Dooley C.M."/>
            <person name="Ersan-Urun Z."/>
            <person name="Eser C."/>
            <person name="Geiger H."/>
            <person name="Geisler M."/>
            <person name="Karotki L."/>
            <person name="Kirn A."/>
            <person name="Konantz J."/>
            <person name="Konantz M."/>
            <person name="Oberlander M."/>
            <person name="Rudolph-Geiger S."/>
            <person name="Teucke M."/>
            <person name="Lanz C."/>
            <person name="Raddatz G."/>
            <person name="Osoegawa K."/>
            <person name="Zhu B."/>
            <person name="Rapp A."/>
            <person name="Widaa S."/>
            <person name="Langford C."/>
            <person name="Yang F."/>
            <person name="Schuster S.C."/>
            <person name="Carter N.P."/>
            <person name="Harrow J."/>
            <person name="Ning Z."/>
            <person name="Herrero J."/>
            <person name="Searle S.M."/>
            <person name="Enright A."/>
            <person name="Geisler R."/>
            <person name="Plasterk R.H."/>
            <person name="Lee C."/>
            <person name="Westerfield M."/>
            <person name="de Jong P.J."/>
            <person name="Zon L.I."/>
            <person name="Postlethwait J.H."/>
            <person name="Nusslein-Volhard C."/>
            <person name="Hubbard T.J."/>
            <person name="Roest Crollius H."/>
            <person name="Rogers J."/>
            <person name="Stemple D.L."/>
        </authorList>
    </citation>
    <scope>NUCLEOTIDE SEQUENCE [LARGE SCALE GENOMIC DNA]</scope>
    <source>
        <strain>Tuebingen</strain>
    </source>
</reference>
<reference key="2">
    <citation type="submission" date="2003-01" db="EMBL/GenBank/DDBJ databases">
        <authorList>
            <consortium name="NIH - Zebrafish Gene Collection (ZGC) project"/>
        </authorList>
    </citation>
    <scope>NUCLEOTIDE SEQUENCE [LARGE SCALE MRNA]</scope>
    <source>
        <strain>AB</strain>
    </source>
</reference>
<reference evidence="5" key="3">
    <citation type="journal article" date="2017" name="Nat. Commun.">
        <title>Histone deacetylase 10 structure and molecular function as a polyamine deacetylase.</title>
        <authorList>
            <person name="Hai Y."/>
            <person name="Shinsky S.A."/>
            <person name="Porter N.J."/>
            <person name="Christianson D.W."/>
        </authorList>
    </citation>
    <scope>X-RAY CRYSTALLOGRAPHY (2.85 ANGSTROMS) OF 2-676</scope>
    <scope>FUNCTION</scope>
    <scope>CATALYTIC ACTIVITY</scope>
    <scope>MUTAGENESIS OF ASN-93; ASP-94 AND GLU-274</scope>
    <scope>BIOPHYSICOCHEMICAL PROPERTIES</scope>
    <scope>ACTIVE SITE</scope>
</reference>
<accession>F1QCV2</accession>
<accession>Q803K0</accession>
<sequence>MASGSALIFDEEMSRYKLLWTDPACEIEVPERLTVSYEALRTHGLAQRCKAVPVRQATEQEILLAHSEEYLEAVKQTPGMNVEELMAFSKKYNDVYFHQNIYHCAKLAAGATLQLVDSVMKREVRNGMALVRPPGHHSQRSAANGFCVFNNVAIAALYAKKNYNLNRILIVDWDVHHGQGIQYCFEEDPSVLYFSWHRYEHQSFWPNLPESDYSSVGKGKGSGFNINLPWNKVGMTNSDYLAAFFHVLLPVAYEFDPELVIVSAGFDSAIGDPEGEMCALPEIFAHLTHLLMPLAAGKMCVVLEGGYNLTSLGQSVCQTVHSLLGDPTPRISGLGTACDSALESIQNVRNVQSSYWSSFKHLAQSETNPKRPRLDATNGGPKESSEPASESNPKKTAQDIVWPEPLKRMPASVRTVVVPPPGVELTLPKNCQHSGDISESTAKEVQRIRDKHFHDLTDQNILRSLGNIISVLDRMMRSDEVCNGCVVVSDLSVSVQCALQHALTEPAERVLVVYVGDGELPVKTNDGKVFLVQICTKETEDKCVNRLSLCLREGESLTAGFMQALLGLILPVAYEFNPALVLGIVGETAAKTGLMTVWGHMTCLIQGLARGRTLTLLQGYDKDLLELTVSALSGASISPLGPLRALKPEDVEMMEKQRQRLQERWGLLRCTVSES</sequence>
<feature type="chain" id="PRO_0000446065" description="Polyamine deacetylase HDAC10">
    <location>
        <begin position="1"/>
        <end position="675"/>
    </location>
</feature>
<feature type="region of interest" description="Disordered" evidence="2">
    <location>
        <begin position="362"/>
        <end position="399"/>
    </location>
</feature>
<feature type="short sequence motif" description="Substrate specificity" evidence="3">
    <location>
        <begin position="23"/>
        <end position="26"/>
    </location>
</feature>
<feature type="active site" description="Proton donor/acceptor" evidence="3 5">
    <location>
        <position position="137"/>
    </location>
</feature>
<feature type="binding site" evidence="3 5">
    <location>
        <position position="22"/>
    </location>
    <ligand>
        <name>substrate</name>
    </ligand>
</feature>
<feature type="binding site" evidence="3 5">
    <location>
        <position position="94"/>
    </location>
    <ligand>
        <name>substrate</name>
    </ligand>
</feature>
<feature type="binding site" evidence="3 5">
    <location>
        <position position="174"/>
    </location>
    <ligand>
        <name>Zn(2+)</name>
        <dbReference type="ChEBI" id="CHEBI:29105"/>
    </ligand>
</feature>
<feature type="binding site" evidence="3 5">
    <location>
        <position position="176"/>
    </location>
    <ligand>
        <name>Zn(2+)</name>
        <dbReference type="ChEBI" id="CHEBI:29105"/>
    </ligand>
</feature>
<feature type="binding site" evidence="3 5">
    <location>
        <position position="267"/>
    </location>
    <ligand>
        <name>Zn(2+)</name>
        <dbReference type="ChEBI" id="CHEBI:29105"/>
    </ligand>
</feature>
<feature type="binding site" evidence="3 5">
    <location>
        <position position="307"/>
    </location>
    <ligand>
        <name>substrate</name>
    </ligand>
</feature>
<feature type="site" description="Substrate specificity" evidence="3">
    <location>
        <position position="274"/>
    </location>
</feature>
<feature type="mutagenesis site" description="No effect on steady-state kinetic parameters." evidence="3">
    <original>N</original>
    <variation>A</variation>
    <location>
        <position position="93"/>
    </location>
</feature>
<feature type="mutagenesis site" description="No effect on steady-state kinetic parameters." evidence="3">
    <original>D</original>
    <variation>A</variation>
    <location>
        <position position="94"/>
    </location>
</feature>
<feature type="mutagenesis site" description="Affects substrate specificity, diminishing N(8)-acetyl-spermidine deacetylase activity by 20-fold and enhancing acetyl-lysine deacetylase activity by about 100-fold." evidence="3">
    <original>E</original>
    <variation>L</variation>
    <location>
        <position position="274"/>
    </location>
</feature>
<feature type="sequence conflict" description="In Ref. 2; AAH44446." evidence="4" ref="2">
    <original>I</original>
    <variation>F</variation>
    <location>
        <position position="154"/>
    </location>
</feature>
<feature type="sequence conflict" description="In Ref. 2; AAH44446." evidence="4" ref="2">
    <original>S</original>
    <variation>T</variation>
    <location>
        <position position="548"/>
    </location>
</feature>
<feature type="sequence conflict" description="In Ref. 2; AAH44446." evidence="4" ref="2">
    <original>G</original>
    <variation>E</variation>
    <location>
        <position position="586"/>
    </location>
</feature>
<feature type="sequence conflict" description="In Ref. 2; AAH44446." evidence="4" ref="2">
    <original>GLMT</original>
    <variation>RLMR</variation>
    <location>
        <begin position="593"/>
        <end position="596"/>
    </location>
</feature>
<feature type="sequence conflict" description="In Ref. 2; AAH44446." evidence="4" ref="2">
    <original>T</original>
    <variation>M</variation>
    <location>
        <position position="613"/>
    </location>
</feature>
<feature type="sequence conflict" description="In Ref. 2; AAH44446." evidence="4" ref="2">
    <original>L</original>
    <variation>P</variation>
    <location>
        <position position="646"/>
    </location>
</feature>
<feature type="sequence conflict" description="In Ref. 2; AAH44446." evidence="4" ref="2">
    <original>S</original>
    <variation>SW</variation>
    <location>
        <position position="675"/>
    </location>
</feature>
<feature type="strand" evidence="7">
    <location>
        <begin position="5"/>
        <end position="8"/>
    </location>
</feature>
<feature type="helix" evidence="7">
    <location>
        <begin position="11"/>
        <end position="14"/>
    </location>
</feature>
<feature type="helix" evidence="7">
    <location>
        <begin position="25"/>
        <end position="27"/>
    </location>
</feature>
<feature type="helix" evidence="7">
    <location>
        <begin position="31"/>
        <end position="42"/>
    </location>
</feature>
<feature type="turn" evidence="8">
    <location>
        <begin position="43"/>
        <end position="45"/>
    </location>
</feature>
<feature type="helix" evidence="7">
    <location>
        <begin position="46"/>
        <end position="48"/>
    </location>
</feature>
<feature type="strand" evidence="7">
    <location>
        <begin position="49"/>
        <end position="51"/>
    </location>
</feature>
<feature type="helix" evidence="7">
    <location>
        <begin position="59"/>
        <end position="62"/>
    </location>
</feature>
<feature type="turn" evidence="7">
    <location>
        <begin position="63"/>
        <end position="65"/>
    </location>
</feature>
<feature type="helix" evidence="7">
    <location>
        <begin position="68"/>
        <end position="75"/>
    </location>
</feature>
<feature type="helix" evidence="7">
    <location>
        <begin position="76"/>
        <end position="79"/>
    </location>
</feature>
<feature type="helix" evidence="7">
    <location>
        <begin position="82"/>
        <end position="89"/>
    </location>
</feature>
<feature type="strand" evidence="7">
    <location>
        <begin position="92"/>
        <end position="94"/>
    </location>
</feature>
<feature type="helix" evidence="7">
    <location>
        <begin position="101"/>
        <end position="120"/>
    </location>
</feature>
<feature type="strand" evidence="7">
    <location>
        <begin position="123"/>
        <end position="129"/>
    </location>
</feature>
<feature type="strand" evidence="7">
    <location>
        <begin position="147"/>
        <end position="149"/>
    </location>
</feature>
<feature type="helix" evidence="7">
    <location>
        <begin position="151"/>
        <end position="163"/>
    </location>
</feature>
<feature type="strand" evidence="7">
    <location>
        <begin position="168"/>
        <end position="172"/>
    </location>
</feature>
<feature type="strand" evidence="7">
    <location>
        <begin position="174"/>
        <end position="176"/>
    </location>
</feature>
<feature type="helix" evidence="7">
    <location>
        <begin position="179"/>
        <end position="185"/>
    </location>
</feature>
<feature type="strand" evidence="7">
    <location>
        <begin position="191"/>
        <end position="198"/>
    </location>
</feature>
<feature type="turn" evidence="7">
    <location>
        <begin position="200"/>
        <end position="203"/>
    </location>
</feature>
<feature type="helix" evidence="7">
    <location>
        <begin position="209"/>
        <end position="211"/>
    </location>
</feature>
<feature type="helix" evidence="7">
    <location>
        <begin position="219"/>
        <end position="221"/>
    </location>
</feature>
<feature type="strand" evidence="7">
    <location>
        <begin position="224"/>
        <end position="230"/>
    </location>
</feature>
<feature type="helix" evidence="7">
    <location>
        <begin position="237"/>
        <end position="246"/>
    </location>
</feature>
<feature type="helix" evidence="7">
    <location>
        <begin position="248"/>
        <end position="255"/>
    </location>
</feature>
<feature type="strand" evidence="7">
    <location>
        <begin position="258"/>
        <end position="264"/>
    </location>
</feature>
<feature type="helix" evidence="9">
    <location>
        <begin position="266"/>
        <end position="268"/>
    </location>
</feature>
<feature type="turn" evidence="7">
    <location>
        <begin position="273"/>
        <end position="275"/>
    </location>
</feature>
<feature type="helix" evidence="7">
    <location>
        <begin position="283"/>
        <end position="291"/>
    </location>
</feature>
<feature type="helix" evidence="7">
    <location>
        <begin position="294"/>
        <end position="297"/>
    </location>
</feature>
<feature type="strand" evidence="7">
    <location>
        <begin position="299"/>
        <end position="303"/>
    </location>
</feature>
<feature type="helix" evidence="7">
    <location>
        <begin position="309"/>
        <end position="323"/>
    </location>
</feature>
<feature type="helix" evidence="7">
    <location>
        <begin position="339"/>
        <end position="352"/>
    </location>
</feature>
<feature type="turn" evidence="7">
    <location>
        <begin position="353"/>
        <end position="355"/>
    </location>
</feature>
<feature type="helix" evidence="7">
    <location>
        <begin position="357"/>
        <end position="359"/>
    </location>
</feature>
<feature type="strand" evidence="6">
    <location>
        <begin position="362"/>
        <end position="364"/>
    </location>
</feature>
<feature type="turn" evidence="10">
    <location>
        <begin position="365"/>
        <end position="367"/>
    </location>
</feature>
<feature type="strand" evidence="7">
    <location>
        <begin position="412"/>
        <end position="418"/>
    </location>
</feature>
<feature type="strand" evidence="11">
    <location>
        <begin position="420"/>
        <end position="422"/>
    </location>
</feature>
<feature type="strand" evidence="7">
    <location>
        <begin position="431"/>
        <end position="433"/>
    </location>
</feature>
<feature type="helix" evidence="7">
    <location>
        <begin position="439"/>
        <end position="452"/>
    </location>
</feature>
<feature type="helix" evidence="7">
    <location>
        <begin position="459"/>
        <end position="476"/>
    </location>
</feature>
<feature type="strand" evidence="7">
    <location>
        <begin position="479"/>
        <end position="489"/>
    </location>
</feature>
<feature type="helix" evidence="7">
    <location>
        <begin position="491"/>
        <end position="503"/>
    </location>
</feature>
<feature type="turn" evidence="7">
    <location>
        <begin position="504"/>
        <end position="506"/>
    </location>
</feature>
<feature type="strand" evidence="7">
    <location>
        <begin position="510"/>
        <end position="518"/>
    </location>
</feature>
<feature type="strand" evidence="7">
    <location>
        <begin position="525"/>
        <end position="537"/>
    </location>
</feature>
<feature type="strand" evidence="7">
    <location>
        <begin position="546"/>
        <end position="550"/>
    </location>
</feature>
<feature type="helix" evidence="7">
    <location>
        <begin position="557"/>
        <end position="567"/>
    </location>
</feature>
<feature type="helix" evidence="7">
    <location>
        <begin position="569"/>
        <end position="576"/>
    </location>
</feature>
<feature type="strand" evidence="7">
    <location>
        <begin position="579"/>
        <end position="585"/>
    </location>
</feature>
<feature type="helix" evidence="10">
    <location>
        <begin position="587"/>
        <end position="589"/>
    </location>
</feature>
<feature type="turn" evidence="9">
    <location>
        <begin position="595"/>
        <end position="597"/>
    </location>
</feature>
<feature type="helix" evidence="7">
    <location>
        <begin position="598"/>
        <end position="605"/>
    </location>
</feature>
<feature type="helix" evidence="7">
    <location>
        <begin position="609"/>
        <end position="611"/>
    </location>
</feature>
<feature type="strand" evidence="7">
    <location>
        <begin position="613"/>
        <end position="619"/>
    </location>
</feature>
<feature type="helix" evidence="7">
    <location>
        <begin position="622"/>
        <end position="632"/>
    </location>
</feature>
<feature type="helix" evidence="7">
    <location>
        <begin position="648"/>
        <end position="661"/>
    </location>
</feature>
<feature type="turn" evidence="7">
    <location>
        <begin position="662"/>
        <end position="664"/>
    </location>
</feature>
<feature type="helix" evidence="7">
    <location>
        <begin position="666"/>
        <end position="668"/>
    </location>
</feature>
<dbReference type="EC" id="3.5.1.48" evidence="3"/>
<dbReference type="EC" id="3.5.1.62" evidence="3"/>
<dbReference type="EMBL" id="FP102808">
    <property type="status" value="NOT_ANNOTATED_CDS"/>
    <property type="molecule type" value="Genomic_DNA"/>
</dbReference>
<dbReference type="EMBL" id="BC044446">
    <property type="protein sequence ID" value="AAH44446.1"/>
    <property type="molecule type" value="mRNA"/>
</dbReference>
<dbReference type="RefSeq" id="NP_956069.1">
    <property type="nucleotide sequence ID" value="NM_199775.1"/>
</dbReference>
<dbReference type="PDB" id="5TD7">
    <property type="method" value="X-ray"/>
    <property type="resolution" value="2.85 A"/>
    <property type="chains" value="A=2-675"/>
</dbReference>
<dbReference type="PDB" id="6UFN">
    <property type="method" value="X-ray"/>
    <property type="resolution" value="2.70 A"/>
    <property type="chains" value="A=2-675"/>
</dbReference>
<dbReference type="PDB" id="6UFO">
    <property type="method" value="X-ray"/>
    <property type="resolution" value="2.68 A"/>
    <property type="chains" value="A=2-675"/>
</dbReference>
<dbReference type="PDB" id="6UHU">
    <property type="method" value="X-ray"/>
    <property type="resolution" value="2.80 A"/>
    <property type="chains" value="A=2-675"/>
</dbReference>
<dbReference type="PDB" id="6UHV">
    <property type="method" value="X-ray"/>
    <property type="resolution" value="2.53 A"/>
    <property type="chains" value="A=2-675"/>
</dbReference>
<dbReference type="PDB" id="6UII">
    <property type="method" value="X-ray"/>
    <property type="resolution" value="2.65 A"/>
    <property type="chains" value="A=2-675"/>
</dbReference>
<dbReference type="PDB" id="6UIJ">
    <property type="method" value="X-ray"/>
    <property type="resolution" value="2.90 A"/>
    <property type="chains" value="A=2-675"/>
</dbReference>
<dbReference type="PDB" id="6UIL">
    <property type="method" value="X-ray"/>
    <property type="resolution" value="2.85 A"/>
    <property type="chains" value="A=2-675"/>
</dbReference>
<dbReference type="PDB" id="6UIM">
    <property type="method" value="X-ray"/>
    <property type="resolution" value="2.75 A"/>
    <property type="chains" value="A=2-675"/>
</dbReference>
<dbReference type="PDB" id="6VNQ">
    <property type="method" value="X-ray"/>
    <property type="resolution" value="2.05 A"/>
    <property type="chains" value="A=2-675"/>
</dbReference>
<dbReference type="PDB" id="6WBQ">
    <property type="method" value="X-ray"/>
    <property type="resolution" value="2.00 A"/>
    <property type="chains" value="A=2-675"/>
</dbReference>
<dbReference type="PDB" id="6WDV">
    <property type="method" value="X-ray"/>
    <property type="resolution" value="2.40 A"/>
    <property type="chains" value="A=2-675"/>
</dbReference>
<dbReference type="PDB" id="6WDW">
    <property type="method" value="X-ray"/>
    <property type="resolution" value="2.20 A"/>
    <property type="chains" value="A=2-675"/>
</dbReference>
<dbReference type="PDB" id="6WDX">
    <property type="method" value="X-ray"/>
    <property type="resolution" value="2.65 A"/>
    <property type="chains" value="A=2-675"/>
</dbReference>
<dbReference type="PDB" id="6WDY">
    <property type="method" value="X-ray"/>
    <property type="resolution" value="2.65 A"/>
    <property type="chains" value="A=2-675"/>
</dbReference>
<dbReference type="PDB" id="7KUQ">
    <property type="method" value="X-ray"/>
    <property type="resolution" value="2.10 A"/>
    <property type="chains" value="A=2-675"/>
</dbReference>
<dbReference type="PDB" id="7KUR">
    <property type="method" value="X-ray"/>
    <property type="resolution" value="2.10 A"/>
    <property type="chains" value="A=2-675"/>
</dbReference>
<dbReference type="PDB" id="7KUS">
    <property type="method" value="X-ray"/>
    <property type="resolution" value="2.00 A"/>
    <property type="chains" value="A=2-675"/>
</dbReference>
<dbReference type="PDB" id="7KUT">
    <property type="method" value="X-ray"/>
    <property type="resolution" value="2.05 A"/>
    <property type="chains" value="A=2-675"/>
</dbReference>
<dbReference type="PDB" id="7KUV">
    <property type="method" value="X-ray"/>
    <property type="resolution" value="2.15 A"/>
    <property type="chains" value="A=2-675"/>
</dbReference>
<dbReference type="PDB" id="7SGG">
    <property type="method" value="X-ray"/>
    <property type="resolution" value="2.10 A"/>
    <property type="chains" value="A=2-675"/>
</dbReference>
<dbReference type="PDB" id="7SGI">
    <property type="method" value="X-ray"/>
    <property type="resolution" value="2.15 A"/>
    <property type="chains" value="A=2-675"/>
</dbReference>
<dbReference type="PDB" id="7SGJ">
    <property type="method" value="X-ray"/>
    <property type="resolution" value="2.15 A"/>
    <property type="chains" value="A=2-675"/>
</dbReference>
<dbReference type="PDB" id="7SGK">
    <property type="method" value="X-ray"/>
    <property type="resolution" value="2.20 A"/>
    <property type="chains" value="A=2-675"/>
</dbReference>
<dbReference type="PDB" id="7U3M">
    <property type="method" value="X-ray"/>
    <property type="resolution" value="2.10 A"/>
    <property type="chains" value="A=2-675"/>
</dbReference>
<dbReference type="PDB" id="7U59">
    <property type="method" value="X-ray"/>
    <property type="resolution" value="2.18 A"/>
    <property type="chains" value="A=2-675"/>
</dbReference>
<dbReference type="PDB" id="7U69">
    <property type="method" value="X-ray"/>
    <property type="resolution" value="2.50 A"/>
    <property type="chains" value="A=2-675"/>
</dbReference>
<dbReference type="PDB" id="7U6A">
    <property type="method" value="X-ray"/>
    <property type="resolution" value="2.25 A"/>
    <property type="chains" value="A=2-675"/>
</dbReference>
<dbReference type="PDB" id="7U6B">
    <property type="method" value="X-ray"/>
    <property type="resolution" value="2.60 A"/>
    <property type="chains" value="B=2-675"/>
</dbReference>
<dbReference type="PDB" id="9CBF">
    <property type="method" value="X-ray"/>
    <property type="resolution" value="2.26 A"/>
    <property type="chains" value="A=2-675"/>
</dbReference>
<dbReference type="PDB" id="9CBG">
    <property type="method" value="X-ray"/>
    <property type="resolution" value="2.60 A"/>
    <property type="chains" value="A=2-675"/>
</dbReference>
<dbReference type="PDB" id="9CBH">
    <property type="method" value="X-ray"/>
    <property type="resolution" value="2.80 A"/>
    <property type="chains" value="A=2-675"/>
</dbReference>
<dbReference type="PDB" id="9CBI">
    <property type="method" value="X-ray"/>
    <property type="resolution" value="2.50 A"/>
    <property type="chains" value="A=2-675"/>
</dbReference>
<dbReference type="PDB" id="9CBJ">
    <property type="method" value="X-ray"/>
    <property type="resolution" value="2.48 A"/>
    <property type="chains" value="A=2-675"/>
</dbReference>
<dbReference type="PDBsum" id="5TD7"/>
<dbReference type="PDBsum" id="6UFN"/>
<dbReference type="PDBsum" id="6UFO"/>
<dbReference type="PDBsum" id="6UHU"/>
<dbReference type="PDBsum" id="6UHV"/>
<dbReference type="PDBsum" id="6UII"/>
<dbReference type="PDBsum" id="6UIJ"/>
<dbReference type="PDBsum" id="6UIL"/>
<dbReference type="PDBsum" id="6UIM"/>
<dbReference type="PDBsum" id="6VNQ"/>
<dbReference type="PDBsum" id="6WBQ"/>
<dbReference type="PDBsum" id="6WDV"/>
<dbReference type="PDBsum" id="6WDW"/>
<dbReference type="PDBsum" id="6WDX"/>
<dbReference type="PDBsum" id="6WDY"/>
<dbReference type="PDBsum" id="7KUQ"/>
<dbReference type="PDBsum" id="7KUR"/>
<dbReference type="PDBsum" id="7KUS"/>
<dbReference type="PDBsum" id="7KUT"/>
<dbReference type="PDBsum" id="7KUV"/>
<dbReference type="PDBsum" id="7SGG"/>
<dbReference type="PDBsum" id="7SGI"/>
<dbReference type="PDBsum" id="7SGJ"/>
<dbReference type="PDBsum" id="7SGK"/>
<dbReference type="PDBsum" id="7U3M"/>
<dbReference type="PDBsum" id="7U59"/>
<dbReference type="PDBsum" id="7U69"/>
<dbReference type="PDBsum" id="7U6A"/>
<dbReference type="PDBsum" id="7U6B"/>
<dbReference type="PDBsum" id="9CBF"/>
<dbReference type="PDBsum" id="9CBG"/>
<dbReference type="PDBsum" id="9CBH"/>
<dbReference type="PDBsum" id="9CBI"/>
<dbReference type="PDBsum" id="9CBJ"/>
<dbReference type="SMR" id="F1QCV2"/>
<dbReference type="FunCoup" id="F1QCV2">
    <property type="interactions" value="165"/>
</dbReference>
<dbReference type="STRING" id="7955.ENSDARP00000109870"/>
<dbReference type="BindingDB" id="F1QCV2"/>
<dbReference type="ChEMBL" id="CHEMBL4802002"/>
<dbReference type="PaxDb" id="7955-ENSDARP00000109870"/>
<dbReference type="Ensembl" id="ENSDART00000127600">
    <property type="protein sequence ID" value="ENSDARP00000109870"/>
    <property type="gene ID" value="ENSDARG00000086458"/>
</dbReference>
<dbReference type="GeneID" id="327253"/>
<dbReference type="KEGG" id="dre:327253"/>
<dbReference type="AGR" id="ZFIN:ZDB-GENE-030131-5464"/>
<dbReference type="CTD" id="83933"/>
<dbReference type="ZFIN" id="ZDB-GENE-030131-5464">
    <property type="gene designation" value="hdac10"/>
</dbReference>
<dbReference type="eggNOG" id="KOG1343">
    <property type="taxonomic scope" value="Eukaryota"/>
</dbReference>
<dbReference type="HOGENOM" id="CLU_007727_6_0_1"/>
<dbReference type="InParanoid" id="F1QCV2"/>
<dbReference type="OMA" id="MAMMCVV"/>
<dbReference type="OrthoDB" id="424012at2759"/>
<dbReference type="TreeFam" id="TF106173"/>
<dbReference type="BRENDA" id="3.5.1.48">
    <property type="organism ID" value="928"/>
</dbReference>
<dbReference type="Reactome" id="R-DRE-3214815">
    <property type="pathway name" value="HDACs deacetylate histones"/>
</dbReference>
<dbReference type="PRO" id="PR:F1QCV2"/>
<dbReference type="Proteomes" id="UP000000437">
    <property type="component" value="Chromosome 25"/>
</dbReference>
<dbReference type="Bgee" id="ENSDARG00000086458">
    <property type="expression patterns" value="Expressed in mature ovarian follicle and 25 other cell types or tissues"/>
</dbReference>
<dbReference type="GO" id="GO:0005737">
    <property type="term" value="C:cytoplasm"/>
    <property type="evidence" value="ECO:0000250"/>
    <property type="project" value="ZFIN"/>
</dbReference>
<dbReference type="GO" id="GO:0005634">
    <property type="term" value="C:nucleus"/>
    <property type="evidence" value="ECO:0007669"/>
    <property type="project" value="UniProtKB-SubCell"/>
</dbReference>
<dbReference type="GO" id="GO:0047609">
    <property type="term" value="F:acetylputrescine deacetylase activity"/>
    <property type="evidence" value="ECO:0007669"/>
    <property type="project" value="UniProtKB-EC"/>
</dbReference>
<dbReference type="GO" id="GO:0047611">
    <property type="term" value="F:acetylspermidine deacetylase activity"/>
    <property type="evidence" value="ECO:0000314"/>
    <property type="project" value="ZFIN"/>
</dbReference>
<dbReference type="GO" id="GO:0019213">
    <property type="term" value="F:deacetylase activity"/>
    <property type="evidence" value="ECO:0000318"/>
    <property type="project" value="GO_Central"/>
</dbReference>
<dbReference type="GO" id="GO:0008270">
    <property type="term" value="F:zinc ion binding"/>
    <property type="evidence" value="ECO:0000314"/>
    <property type="project" value="ZFIN"/>
</dbReference>
<dbReference type="GO" id="GO:0040029">
    <property type="term" value="P:epigenetic regulation of gene expression"/>
    <property type="evidence" value="ECO:0000318"/>
    <property type="project" value="GO_Central"/>
</dbReference>
<dbReference type="GO" id="GO:0035825">
    <property type="term" value="P:homologous recombination"/>
    <property type="evidence" value="ECO:0000250"/>
    <property type="project" value="UniProtKB"/>
</dbReference>
<dbReference type="GO" id="GO:0016236">
    <property type="term" value="P:macroautophagy"/>
    <property type="evidence" value="ECO:0000250"/>
    <property type="project" value="UniProtKB"/>
</dbReference>
<dbReference type="GO" id="GO:0106047">
    <property type="term" value="P:polyamine deacetylation"/>
    <property type="evidence" value="ECO:0000314"/>
    <property type="project" value="ZFIN"/>
</dbReference>
<dbReference type="GO" id="GO:0106048">
    <property type="term" value="P:spermidine deacetylation"/>
    <property type="evidence" value="ECO:0000314"/>
    <property type="project" value="ZFIN"/>
</dbReference>
<dbReference type="GO" id="GO:0036269">
    <property type="term" value="P:swimming behavior"/>
    <property type="evidence" value="ECO:0000316"/>
    <property type="project" value="ZFIN"/>
</dbReference>
<dbReference type="CDD" id="cd11683">
    <property type="entry name" value="HDAC10"/>
    <property type="match status" value="1"/>
</dbReference>
<dbReference type="FunFam" id="3.40.800.20:FF:000005">
    <property type="entry name" value="histone deacetylase 6"/>
    <property type="match status" value="1"/>
</dbReference>
<dbReference type="Gene3D" id="3.40.800.20">
    <property type="entry name" value="Histone deacetylase domain"/>
    <property type="match status" value="1"/>
</dbReference>
<dbReference type="InterPro" id="IPR050284">
    <property type="entry name" value="HDAC_PDAC"/>
</dbReference>
<dbReference type="InterPro" id="IPR000286">
    <property type="entry name" value="His_deacetylse"/>
</dbReference>
<dbReference type="InterPro" id="IPR023801">
    <property type="entry name" value="His_deacetylse_dom"/>
</dbReference>
<dbReference type="InterPro" id="IPR037138">
    <property type="entry name" value="His_deacetylse_dom_sf"/>
</dbReference>
<dbReference type="InterPro" id="IPR023696">
    <property type="entry name" value="Ureohydrolase_dom_sf"/>
</dbReference>
<dbReference type="PANTHER" id="PTHR10625">
    <property type="entry name" value="HISTONE DEACETYLASE HDAC1-RELATED"/>
    <property type="match status" value="1"/>
</dbReference>
<dbReference type="PANTHER" id="PTHR10625:SF43">
    <property type="entry name" value="POLYAMINE DEACETYLASE HDAC10"/>
    <property type="match status" value="1"/>
</dbReference>
<dbReference type="Pfam" id="PF00850">
    <property type="entry name" value="Hist_deacetyl"/>
    <property type="match status" value="1"/>
</dbReference>
<dbReference type="PRINTS" id="PR01270">
    <property type="entry name" value="HDASUPER"/>
</dbReference>
<dbReference type="SUPFAM" id="SSF52768">
    <property type="entry name" value="Arginase/deacetylase"/>
    <property type="match status" value="2"/>
</dbReference>
<gene>
    <name type="primary">hdac10</name>
</gene>
<name>HDA10_DANRE</name>